<proteinExistence type="inferred from homology"/>
<name>ARLY_STRMK</name>
<gene>
    <name evidence="1" type="primary">argH</name>
    <name type="ordered locus">Smlt3296</name>
</gene>
<protein>
    <recommendedName>
        <fullName evidence="1">Argininosuccinate lyase</fullName>
        <shortName evidence="1">ASAL</shortName>
        <ecNumber evidence="1">4.3.2.1</ecNumber>
    </recommendedName>
    <alternativeName>
        <fullName evidence="1">Arginosuccinase</fullName>
    </alternativeName>
</protein>
<dbReference type="EC" id="4.3.2.1" evidence="1"/>
<dbReference type="EMBL" id="AM743169">
    <property type="protein sequence ID" value="CAQ46731.1"/>
    <property type="molecule type" value="Genomic_DNA"/>
</dbReference>
<dbReference type="RefSeq" id="WP_012480826.1">
    <property type="nucleotide sequence ID" value="NC_010943.1"/>
</dbReference>
<dbReference type="SMR" id="B2FMD6"/>
<dbReference type="EnsemblBacteria" id="CAQ46731">
    <property type="protein sequence ID" value="CAQ46731"/>
    <property type="gene ID" value="Smlt3296"/>
</dbReference>
<dbReference type="KEGG" id="sml:Smlt3296"/>
<dbReference type="PATRIC" id="fig|522373.3.peg.3090"/>
<dbReference type="eggNOG" id="COG0165">
    <property type="taxonomic scope" value="Bacteria"/>
</dbReference>
<dbReference type="HOGENOM" id="CLU_027272_2_0_6"/>
<dbReference type="UniPathway" id="UPA00068">
    <property type="reaction ID" value="UER00114"/>
</dbReference>
<dbReference type="Proteomes" id="UP000008840">
    <property type="component" value="Chromosome"/>
</dbReference>
<dbReference type="GO" id="GO:0005829">
    <property type="term" value="C:cytosol"/>
    <property type="evidence" value="ECO:0007669"/>
    <property type="project" value="TreeGrafter"/>
</dbReference>
<dbReference type="GO" id="GO:0004056">
    <property type="term" value="F:argininosuccinate lyase activity"/>
    <property type="evidence" value="ECO:0007669"/>
    <property type="project" value="UniProtKB-UniRule"/>
</dbReference>
<dbReference type="GO" id="GO:0042450">
    <property type="term" value="P:arginine biosynthetic process via ornithine"/>
    <property type="evidence" value="ECO:0007669"/>
    <property type="project" value="InterPro"/>
</dbReference>
<dbReference type="GO" id="GO:0006526">
    <property type="term" value="P:L-arginine biosynthetic process"/>
    <property type="evidence" value="ECO:0007669"/>
    <property type="project" value="UniProtKB-UniRule"/>
</dbReference>
<dbReference type="Gene3D" id="1.10.40.30">
    <property type="entry name" value="Fumarase/aspartase (C-terminal domain)"/>
    <property type="match status" value="1"/>
</dbReference>
<dbReference type="Gene3D" id="1.20.200.10">
    <property type="entry name" value="Fumarase/aspartase (Central domain)"/>
    <property type="match status" value="1"/>
</dbReference>
<dbReference type="Gene3D" id="1.10.275.10">
    <property type="entry name" value="Fumarase/aspartase (N-terminal domain)"/>
    <property type="match status" value="1"/>
</dbReference>
<dbReference type="HAMAP" id="MF_00006">
    <property type="entry name" value="Arg_succ_lyase"/>
    <property type="match status" value="1"/>
</dbReference>
<dbReference type="InterPro" id="IPR009049">
    <property type="entry name" value="Argininosuccinate_lyase"/>
</dbReference>
<dbReference type="InterPro" id="IPR024083">
    <property type="entry name" value="Fumarase/histidase_N"/>
</dbReference>
<dbReference type="InterPro" id="IPR020557">
    <property type="entry name" value="Fumarate_lyase_CS"/>
</dbReference>
<dbReference type="InterPro" id="IPR000362">
    <property type="entry name" value="Fumarate_lyase_fam"/>
</dbReference>
<dbReference type="InterPro" id="IPR022761">
    <property type="entry name" value="Fumarate_lyase_N"/>
</dbReference>
<dbReference type="InterPro" id="IPR008948">
    <property type="entry name" value="L-Aspartase-like"/>
</dbReference>
<dbReference type="NCBIfam" id="TIGR00838">
    <property type="entry name" value="argH"/>
    <property type="match status" value="1"/>
</dbReference>
<dbReference type="PANTHER" id="PTHR43814">
    <property type="entry name" value="ARGININOSUCCINATE LYASE"/>
    <property type="match status" value="1"/>
</dbReference>
<dbReference type="PANTHER" id="PTHR43814:SF1">
    <property type="entry name" value="ARGININOSUCCINATE LYASE"/>
    <property type="match status" value="1"/>
</dbReference>
<dbReference type="Pfam" id="PF00206">
    <property type="entry name" value="Lyase_1"/>
    <property type="match status" value="1"/>
</dbReference>
<dbReference type="PRINTS" id="PR00145">
    <property type="entry name" value="ARGSUCLYASE"/>
</dbReference>
<dbReference type="PRINTS" id="PR00149">
    <property type="entry name" value="FUMRATELYASE"/>
</dbReference>
<dbReference type="SUPFAM" id="SSF48557">
    <property type="entry name" value="L-aspartase-like"/>
    <property type="match status" value="1"/>
</dbReference>
<dbReference type="PROSITE" id="PS00163">
    <property type="entry name" value="FUMARATE_LYASES"/>
    <property type="match status" value="1"/>
</dbReference>
<accession>B2FMD6</accession>
<keyword id="KW-0028">Amino-acid biosynthesis</keyword>
<keyword id="KW-0055">Arginine biosynthesis</keyword>
<keyword id="KW-0963">Cytoplasm</keyword>
<keyword id="KW-0456">Lyase</keyword>
<keyword id="KW-1185">Reference proteome</keyword>
<comment type="catalytic activity">
    <reaction evidence="1">
        <text>2-(N(omega)-L-arginino)succinate = fumarate + L-arginine</text>
        <dbReference type="Rhea" id="RHEA:24020"/>
        <dbReference type="ChEBI" id="CHEBI:29806"/>
        <dbReference type="ChEBI" id="CHEBI:32682"/>
        <dbReference type="ChEBI" id="CHEBI:57472"/>
        <dbReference type="EC" id="4.3.2.1"/>
    </reaction>
</comment>
<comment type="pathway">
    <text evidence="1">Amino-acid biosynthesis; L-arginine biosynthesis; L-arginine from L-ornithine and carbamoyl phosphate: step 3/3.</text>
</comment>
<comment type="subcellular location">
    <subcellularLocation>
        <location evidence="1">Cytoplasm</location>
    </subcellularLocation>
</comment>
<comment type="similarity">
    <text evidence="1">Belongs to the lyase 1 family. Argininosuccinate lyase subfamily.</text>
</comment>
<feature type="chain" id="PRO_1000089121" description="Argininosuccinate lyase">
    <location>
        <begin position="1"/>
        <end position="431"/>
    </location>
</feature>
<organism>
    <name type="scientific">Stenotrophomonas maltophilia (strain K279a)</name>
    <dbReference type="NCBI Taxonomy" id="522373"/>
    <lineage>
        <taxon>Bacteria</taxon>
        <taxon>Pseudomonadati</taxon>
        <taxon>Pseudomonadota</taxon>
        <taxon>Gammaproteobacteria</taxon>
        <taxon>Lysobacterales</taxon>
        <taxon>Lysobacteraceae</taxon>
        <taxon>Stenotrophomonas</taxon>
        <taxon>Stenotrophomonas maltophilia group</taxon>
    </lineage>
</organism>
<reference key="1">
    <citation type="journal article" date="2008" name="Genome Biol.">
        <title>The complete genome, comparative and functional analysis of Stenotrophomonas maltophilia reveals an organism heavily shielded by drug resistance determinants.</title>
        <authorList>
            <person name="Crossman L.C."/>
            <person name="Gould V.C."/>
            <person name="Dow J.M."/>
            <person name="Vernikos G.S."/>
            <person name="Okazaki A."/>
            <person name="Sebaihia M."/>
            <person name="Saunders D."/>
            <person name="Arrowsmith C."/>
            <person name="Carver T."/>
            <person name="Peters N."/>
            <person name="Adlem E."/>
            <person name="Kerhornou A."/>
            <person name="Lord A."/>
            <person name="Murphy L."/>
            <person name="Seeger K."/>
            <person name="Squares R."/>
            <person name="Rutter S."/>
            <person name="Quail M.A."/>
            <person name="Rajandream M.A."/>
            <person name="Harris D."/>
            <person name="Churcher C."/>
            <person name="Bentley S.D."/>
            <person name="Parkhill J."/>
            <person name="Thomson N.R."/>
            <person name="Avison M.B."/>
        </authorList>
    </citation>
    <scope>NUCLEOTIDE SEQUENCE [LARGE SCALE GENOMIC DNA]</scope>
    <source>
        <strain>K279a</strain>
    </source>
</reference>
<evidence type="ECO:0000255" key="1">
    <source>
        <dbReference type="HAMAP-Rule" id="MF_00006"/>
    </source>
</evidence>
<sequence length="431" mass="46444">MADLLWQKPGVAVDAQIQTFLAGDDVILDREFFLHDIAASAAHAQGLQHIGILSADELAGLLRELEILAQDFREGRFVLDTQYEDGHSAIEARLTERLGDAGRKIHTGRSRNDQILVATRLWLKEKLLSVAQLSADVAKVALDRAQAEKDLPIPGYTHIQRAVVSSAGMWWAGWAEAFIDNAIRARDTHALVDANPLGTAAGYGVNLPLDREHTTAALGFARMQISPIYAQLSRGKFELAALEALGGATLDLRRIAWDLSLFTSAEFGFVALPAQYTTGSSIMPNKRNPDVIELMRATHASVAAARTEIEQLLSLPSGYHRDLQSSKGAIFHGFGRGLAALELLPALLANLEWRDDKLRAAIDSGMYATDVAVEAAVAGVPFREAYKAAAAGADSAGQGRTPEGSLAARVSPGSAADLRLDELRARWQALS</sequence>